<evidence type="ECO:0000250" key="1">
    <source>
        <dbReference type="UniProtKB" id="P38051"/>
    </source>
</evidence>
<evidence type="ECO:0000305" key="2"/>
<dbReference type="EC" id="5.4.4.2" evidence="1"/>
<dbReference type="EMBL" id="AE000516">
    <property type="protein sequence ID" value="AAK47653.1"/>
    <property type="molecule type" value="Genomic_DNA"/>
</dbReference>
<dbReference type="PIR" id="H70595">
    <property type="entry name" value="H70595"/>
</dbReference>
<dbReference type="RefSeq" id="WP_003416879.1">
    <property type="nucleotide sequence ID" value="NZ_KK341227.1"/>
</dbReference>
<dbReference type="SMR" id="P9WFW8"/>
<dbReference type="KEGG" id="mtc:MT3311"/>
<dbReference type="PATRIC" id="fig|83331.31.peg.3565"/>
<dbReference type="HOGENOM" id="CLU_006493_8_6_11"/>
<dbReference type="UniPathway" id="UPA00079"/>
<dbReference type="UniPathway" id="UPA01057">
    <property type="reaction ID" value="UER00163"/>
</dbReference>
<dbReference type="Proteomes" id="UP000001020">
    <property type="component" value="Chromosome"/>
</dbReference>
<dbReference type="GO" id="GO:0008909">
    <property type="term" value="F:isochorismate synthase activity"/>
    <property type="evidence" value="ECO:0007669"/>
    <property type="project" value="UniProtKB-EC"/>
</dbReference>
<dbReference type="GO" id="GO:0046872">
    <property type="term" value="F:metal ion binding"/>
    <property type="evidence" value="ECO:0007669"/>
    <property type="project" value="UniProtKB-KW"/>
</dbReference>
<dbReference type="GO" id="GO:0009234">
    <property type="term" value="P:menaquinone biosynthetic process"/>
    <property type="evidence" value="ECO:0007669"/>
    <property type="project" value="UniProtKB-UniPathway"/>
</dbReference>
<dbReference type="Gene3D" id="3.60.120.10">
    <property type="entry name" value="Anthranilate synthase"/>
    <property type="match status" value="1"/>
</dbReference>
<dbReference type="InterPro" id="IPR005801">
    <property type="entry name" value="ADC_synthase"/>
</dbReference>
<dbReference type="InterPro" id="IPR015890">
    <property type="entry name" value="Chorismate_C"/>
</dbReference>
<dbReference type="InterPro" id="IPR004561">
    <property type="entry name" value="IsoChor_synthase"/>
</dbReference>
<dbReference type="NCBIfam" id="TIGR00543">
    <property type="entry name" value="isochor_syn"/>
    <property type="match status" value="1"/>
</dbReference>
<dbReference type="PANTHER" id="PTHR42839">
    <property type="entry name" value="ISOCHORISMATE SYNTHASE ENTC"/>
    <property type="match status" value="1"/>
</dbReference>
<dbReference type="PANTHER" id="PTHR42839:SF2">
    <property type="entry name" value="ISOCHORISMATE SYNTHASE ENTC"/>
    <property type="match status" value="1"/>
</dbReference>
<dbReference type="Pfam" id="PF00425">
    <property type="entry name" value="Chorismate_bind"/>
    <property type="match status" value="1"/>
</dbReference>
<dbReference type="SUPFAM" id="SSF56322">
    <property type="entry name" value="ADC synthase"/>
    <property type="match status" value="1"/>
</dbReference>
<proteinExistence type="inferred from homology"/>
<accession>P9WFW8</accession>
<accession>L0TDH4</accession>
<accession>O05851</accession>
<accession>Q7D5X1</accession>
<feature type="chain" id="PRO_0000428464" description="Putative isochorismate synthase MenF">
    <location>
        <begin position="1"/>
        <end position="372"/>
    </location>
</feature>
<feature type="active site" description="Proton acceptor" evidence="1">
    <location>
        <position position="119"/>
    </location>
</feature>
<feature type="active site" description="Proton donor" evidence="1">
    <location>
        <position position="175"/>
    </location>
</feature>
<feature type="binding site" evidence="1">
    <location>
        <position position="219"/>
    </location>
    <ligand>
        <name>Mg(2+)</name>
        <dbReference type="ChEBI" id="CHEBI:18420"/>
    </ligand>
</feature>
<feature type="binding site" evidence="1">
    <location>
        <position position="356"/>
    </location>
    <ligand>
        <name>Mg(2+)</name>
        <dbReference type="ChEBI" id="CHEBI:18420"/>
    </ligand>
</feature>
<reference key="1">
    <citation type="journal article" date="2002" name="J. Bacteriol.">
        <title>Whole-genome comparison of Mycobacterium tuberculosis clinical and laboratory strains.</title>
        <authorList>
            <person name="Fleischmann R.D."/>
            <person name="Alland D."/>
            <person name="Eisen J.A."/>
            <person name="Carpenter L."/>
            <person name="White O."/>
            <person name="Peterson J.D."/>
            <person name="DeBoy R.T."/>
            <person name="Dodson R.J."/>
            <person name="Gwinn M.L."/>
            <person name="Haft D.H."/>
            <person name="Hickey E.K."/>
            <person name="Kolonay J.F."/>
            <person name="Nelson W.C."/>
            <person name="Umayam L.A."/>
            <person name="Ermolaeva M.D."/>
            <person name="Salzberg S.L."/>
            <person name="Delcher A."/>
            <person name="Utterback T.R."/>
            <person name="Weidman J.F."/>
            <person name="Khouri H.M."/>
            <person name="Gill J."/>
            <person name="Mikula A."/>
            <person name="Bishai W."/>
            <person name="Jacobs W.R. Jr."/>
            <person name="Venter J.C."/>
            <person name="Fraser C.M."/>
        </authorList>
    </citation>
    <scope>NUCLEOTIDE SEQUENCE [LARGE SCALE GENOMIC DNA]</scope>
    <source>
        <strain>CDC 1551 / Oshkosh</strain>
    </source>
</reference>
<gene>
    <name type="primary">menF</name>
    <name type="synonym">entC</name>
    <name type="ordered locus">MT3311</name>
</gene>
<protein>
    <recommendedName>
        <fullName>Putative isochorismate synthase MenF</fullName>
        <ecNumber evidence="1">5.4.4.2</ecNumber>
    </recommendedName>
    <alternativeName>
        <fullName>Isochorismate mutase</fullName>
    </alternativeName>
</protein>
<keyword id="KW-0413">Isomerase</keyword>
<keyword id="KW-0460">Magnesium</keyword>
<keyword id="KW-0474">Menaquinone biosynthesis</keyword>
<keyword id="KW-0479">Metal-binding</keyword>
<keyword id="KW-1185">Reference proteome</keyword>
<name>MENF_MYCTO</name>
<sequence>MSAHVATLHPEPPFALCGPRGTLIARGVRTRYCDVRAAQAALRSGTAPILLGALPFDVSRPAALMVPDGVLRARKLPDWPTGPLPKVRVAAALPPPADYLTRIGRARDLLAAFDGPLHKVVLARAVQLTADAPLDARVLLRRLVVADPTAYGYLVDLTSAGNDDTGAALVGASPELLVARSGNRVMCKPFAGSAPRAADPKLDAANAAALASSAKNRHEHQLVVDTMRVALEPLCEDLTIPAQPQLNRTAAVWHLCTAITGRLRNISTTAIDLALALHPTPAVGGVPTKAATELIAELEGDRGFYAGAVGWCDGRGDGHWVVSIRCAQLSADRRAALAHAGGGIVAESDPDDELEETTTKFATILTALGVEQ</sequence>
<comment type="function">
    <text evidence="1">Catalyzes the conversion of chorismate to isochorismate.</text>
</comment>
<comment type="catalytic activity">
    <reaction evidence="1">
        <text>chorismate = isochorismate</text>
        <dbReference type="Rhea" id="RHEA:18985"/>
        <dbReference type="ChEBI" id="CHEBI:29748"/>
        <dbReference type="ChEBI" id="CHEBI:29780"/>
        <dbReference type="EC" id="5.4.4.2"/>
    </reaction>
</comment>
<comment type="cofactor">
    <cofactor evidence="1">
        <name>Mg(2+)</name>
        <dbReference type="ChEBI" id="CHEBI:18420"/>
    </cofactor>
</comment>
<comment type="pathway">
    <text evidence="1">Quinol/quinone metabolism; 1,4-dihydroxy-2-naphthoate biosynthesis; 1,4-dihydroxy-2-naphthoate from chorismate: step 1/7.</text>
</comment>
<comment type="pathway">
    <text evidence="1">Quinol/quinone metabolism; menaquinone biosynthesis.</text>
</comment>
<comment type="similarity">
    <text evidence="2">Belongs to the isochorismate synthase family.</text>
</comment>
<organism>
    <name type="scientific">Mycobacterium tuberculosis (strain CDC 1551 / Oshkosh)</name>
    <dbReference type="NCBI Taxonomy" id="83331"/>
    <lineage>
        <taxon>Bacteria</taxon>
        <taxon>Bacillati</taxon>
        <taxon>Actinomycetota</taxon>
        <taxon>Actinomycetes</taxon>
        <taxon>Mycobacteriales</taxon>
        <taxon>Mycobacteriaceae</taxon>
        <taxon>Mycobacterium</taxon>
        <taxon>Mycobacterium tuberculosis complex</taxon>
    </lineage>
</organism>